<proteinExistence type="inferred from homology"/>
<keyword id="KW-0535">Nitrogen fixation</keyword>
<organism>
    <name type="scientific">Klebsiella pneumoniae</name>
    <dbReference type="NCBI Taxonomy" id="573"/>
    <lineage>
        <taxon>Bacteria</taxon>
        <taxon>Pseudomonadati</taxon>
        <taxon>Pseudomonadota</taxon>
        <taxon>Gammaproteobacteria</taxon>
        <taxon>Enterobacterales</taxon>
        <taxon>Enterobacteriaceae</taxon>
        <taxon>Klebsiella/Raoultella group</taxon>
        <taxon>Klebsiella</taxon>
        <taxon>Klebsiella pneumoniae complex</taxon>
    </lineage>
</organism>
<evidence type="ECO:0000250" key="1"/>
<evidence type="ECO:0000305" key="2"/>
<reference key="1">
    <citation type="journal article" date="1988" name="J. Mol. Biol.">
        <title>Nucleotide sequence of a 24,206-base-pair DNA fragment carrying the entire nitrogen fixation gene cluster of Klebsiella pneumoniae.</title>
        <authorList>
            <person name="Arnold W."/>
            <person name="Rump A."/>
            <person name="Klipp W."/>
            <person name="Priefer U.B."/>
            <person name="Puehler A."/>
        </authorList>
    </citation>
    <scope>NUCLEOTIDE SEQUENCE [GENOMIC DNA]</scope>
</reference>
<reference key="2">
    <citation type="journal article" date="1988" name="Nucleic Acids Res.">
        <title>The nucleotide sequence of the nifT, nifY, nifX and nifW genes of K. pneumoniae.</title>
        <authorList>
            <person name="Beynon J."/>
            <person name="Cannon M."/>
            <person name="Banan-Wollaston V."/>
            <person name="Ally A."/>
            <person name="Sutterquist R."/>
            <person name="Cannon F."/>
        </authorList>
    </citation>
    <scope>NUCLEOTIDE SEQUENCE [GENOMIC DNA]</scope>
</reference>
<reference key="3">
    <citation type="submission" date="1989-07" db="EMBL/GenBank/DDBJ databases">
        <authorList>
            <person name="Collet T.A."/>
            <person name="White T."/>
            <person name="Howard K."/>
            <person name="Orme-Johnson W.H."/>
        </authorList>
    </citation>
    <scope>NUCLEOTIDE SEQUENCE [GENOMIC DNA]</scope>
    <source>
        <strain>UN</strain>
    </source>
</reference>
<comment type="function">
    <text evidence="1">May protect the nitrogenase Fe-Mo protein from oxidative damage.</text>
</comment>
<comment type="subunit">
    <text evidence="1">Homotrimer; associates with NifD.</text>
</comment>
<comment type="similarity">
    <text evidence="2">Belongs to the NifW family.</text>
</comment>
<accession>P09137</accession>
<gene>
    <name type="primary">nifW</name>
</gene>
<name>NIFW_KLEPN</name>
<dbReference type="EMBL" id="X13303">
    <property type="protein sequence ID" value="CAA31677.1"/>
    <property type="molecule type" value="Genomic_DNA"/>
</dbReference>
<dbReference type="EMBL" id="X12600">
    <property type="protein sequence ID" value="CAA31120.1"/>
    <property type="molecule type" value="Genomic_DNA"/>
</dbReference>
<dbReference type="EMBL" id="M24106">
    <property type="protein sequence ID" value="AAA25103.1"/>
    <property type="molecule type" value="Genomic_DNA"/>
</dbReference>
<dbReference type="PIR" id="S01842">
    <property type="entry name" value="S01842"/>
</dbReference>
<dbReference type="GO" id="GO:0009399">
    <property type="term" value="P:nitrogen fixation"/>
    <property type="evidence" value="ECO:0007669"/>
    <property type="project" value="UniProtKB-KW"/>
</dbReference>
<dbReference type="InterPro" id="IPR004893">
    <property type="entry name" value="NifW"/>
</dbReference>
<dbReference type="Pfam" id="PF03206">
    <property type="entry name" value="NifW"/>
    <property type="match status" value="1"/>
</dbReference>
<protein>
    <recommendedName>
        <fullName>Nitrogenase-stabilizing/protective protein NifW</fullName>
    </recommendedName>
</protein>
<sequence length="86" mass="10179">MMEWFYQIPGVDELRSAESFFQFFAVPYQPELLGRCSLPVLATFHRKLRAEVPLQNRLEDNDRAPWLLARRLLAESYQQQFQESGT</sequence>
<feature type="chain" id="PRO_0000219534" description="Nitrogenase-stabilizing/protective protein NifW">
    <location>
        <begin position="1"/>
        <end position="86"/>
    </location>
</feature>